<comment type="function">
    <text evidence="5">Has a role in meiosis.</text>
</comment>
<comment type="catalytic activity">
    <reaction>
        <text>L-seryl-[protein] + ATP = O-phospho-L-seryl-[protein] + ADP + H(+)</text>
        <dbReference type="Rhea" id="RHEA:17989"/>
        <dbReference type="Rhea" id="RHEA-COMP:9863"/>
        <dbReference type="Rhea" id="RHEA-COMP:11604"/>
        <dbReference type="ChEBI" id="CHEBI:15378"/>
        <dbReference type="ChEBI" id="CHEBI:29999"/>
        <dbReference type="ChEBI" id="CHEBI:30616"/>
        <dbReference type="ChEBI" id="CHEBI:83421"/>
        <dbReference type="ChEBI" id="CHEBI:456216"/>
        <dbReference type="EC" id="2.7.11.1"/>
    </reaction>
</comment>
<comment type="catalytic activity">
    <reaction>
        <text>L-threonyl-[protein] + ATP = O-phospho-L-threonyl-[protein] + ADP + H(+)</text>
        <dbReference type="Rhea" id="RHEA:46608"/>
        <dbReference type="Rhea" id="RHEA-COMP:11060"/>
        <dbReference type="Rhea" id="RHEA-COMP:11605"/>
        <dbReference type="ChEBI" id="CHEBI:15378"/>
        <dbReference type="ChEBI" id="CHEBI:30013"/>
        <dbReference type="ChEBI" id="CHEBI:30616"/>
        <dbReference type="ChEBI" id="CHEBI:61977"/>
        <dbReference type="ChEBI" id="CHEBI:456216"/>
        <dbReference type="EC" id="2.7.11.1"/>
    </reaction>
</comment>
<comment type="subcellular location">
    <subcellularLocation>
        <location evidence="6">Cytoplasm</location>
    </subcellularLocation>
    <subcellularLocation>
        <location evidence="6">Nucleus</location>
        <location evidence="6">Nucleolus</location>
    </subcellularLocation>
</comment>
<comment type="similarity">
    <text evidence="1">Belongs to the protein kinase superfamily. Ser/Thr protein kinase family.</text>
</comment>
<sequence length="624" mass="73328">MDLLGLKELDNNKLVSKAKENGVEFSDLFLLSSGYLRDRENASASVSSKNERMVLNEERQNCWTKRNDPKGLTYYQLLKPSEVEILSRPETRRKRMACQVFFLNYYISTIEYHKLRKERLEEFTACTSSLKQSKQKRLWKEHCGRERAFLRKKRTKIQCSHFDLLVKLGQGGYGSVWLAKKRNTHELLAMKMMKKSTLQQLNEVKHILNERDILTNTNSEWLVKLYYAFQDKEKVYLAMEYVPGGDFRTFLTTKGLLHENQTRFYLAEMVAAISAVHKLGYMHRDLKPENFLIDQKGHIKLSDFGLSTAIVTSNQVNRLQHALVSAVNPQRPYLTQKQRRNIYKALLEKNENKVNSVVGSPEYMAPEVVYGKKYDRTVDYWSLGCICYECLVGYPPFSGSTLQETWTNLYYWREMLQRPSKNENGIYDKKARSVSDEAWSFITKCLTEPTSRFQSTIEIQKHPFFKRLHWNGLRKRAVPPFVPRLENQLDTSYFDDFNDEQVLDAYKDVYEKQRKAEQKAKSNGVMNGNQRQFLGFTFKYRPNARKPLVGRHREKRQLRKEKPEKKNNSTKQKDLITVSHNKGTTAIEDLDEDKRSKTKGHKTKSSRVHRLLERKGKDLYEFLL</sequence>
<name>PPK35_SCHPO</name>
<dbReference type="EC" id="2.7.11.1"/>
<dbReference type="EMBL" id="CU329672">
    <property type="protein sequence ID" value="CAA22652.1"/>
    <property type="molecule type" value="Genomic_DNA"/>
</dbReference>
<dbReference type="PIR" id="T41341">
    <property type="entry name" value="T41341"/>
</dbReference>
<dbReference type="RefSeq" id="NP_588283.1">
    <property type="nucleotide sequence ID" value="NM_001023273.2"/>
</dbReference>
<dbReference type="SMR" id="O94487"/>
<dbReference type="BioGRID" id="276045">
    <property type="interactions" value="19"/>
</dbReference>
<dbReference type="FunCoup" id="O94487">
    <property type="interactions" value="97"/>
</dbReference>
<dbReference type="STRING" id="284812.O94487"/>
<dbReference type="PaxDb" id="4896-SPCC417.06c.1"/>
<dbReference type="EnsemblFungi" id="SPCC417.06c.1">
    <property type="protein sequence ID" value="SPCC417.06c.1:pep"/>
    <property type="gene ID" value="SPCC417.06c"/>
</dbReference>
<dbReference type="GeneID" id="2539482"/>
<dbReference type="KEGG" id="spo:2539482"/>
<dbReference type="PomBase" id="SPCC417.06c"/>
<dbReference type="VEuPathDB" id="FungiDB:SPCC417.06c"/>
<dbReference type="eggNOG" id="KOG0605">
    <property type="taxonomic scope" value="Eukaryota"/>
</dbReference>
<dbReference type="HOGENOM" id="CLU_000288_67_4_1"/>
<dbReference type="InParanoid" id="O94487"/>
<dbReference type="OMA" id="NTNSEWL"/>
<dbReference type="PhylomeDB" id="O94487"/>
<dbReference type="CD-CODE" id="576F0A76">
    <property type="entry name" value="Centrosome"/>
</dbReference>
<dbReference type="PRO" id="PR:O94487"/>
<dbReference type="Proteomes" id="UP000002485">
    <property type="component" value="Chromosome III"/>
</dbReference>
<dbReference type="GO" id="GO:0005829">
    <property type="term" value="C:cytosol"/>
    <property type="evidence" value="ECO:0007005"/>
    <property type="project" value="PomBase"/>
</dbReference>
<dbReference type="GO" id="GO:0035974">
    <property type="term" value="C:meiotic spindle pole body"/>
    <property type="evidence" value="ECO:0000314"/>
    <property type="project" value="PomBase"/>
</dbReference>
<dbReference type="GO" id="GO:0005730">
    <property type="term" value="C:nucleolus"/>
    <property type="evidence" value="ECO:0007005"/>
    <property type="project" value="PomBase"/>
</dbReference>
<dbReference type="GO" id="GO:0005634">
    <property type="term" value="C:nucleus"/>
    <property type="evidence" value="ECO:0007005"/>
    <property type="project" value="PomBase"/>
</dbReference>
<dbReference type="GO" id="GO:0005628">
    <property type="term" value="C:prospore membrane"/>
    <property type="evidence" value="ECO:0000314"/>
    <property type="project" value="PomBase"/>
</dbReference>
<dbReference type="GO" id="GO:0005816">
    <property type="term" value="C:spindle pole body"/>
    <property type="evidence" value="ECO:0000318"/>
    <property type="project" value="GO_Central"/>
</dbReference>
<dbReference type="GO" id="GO:0005524">
    <property type="term" value="F:ATP binding"/>
    <property type="evidence" value="ECO:0000255"/>
    <property type="project" value="PomBase"/>
</dbReference>
<dbReference type="GO" id="GO:0106310">
    <property type="term" value="F:protein serine kinase activity"/>
    <property type="evidence" value="ECO:0007669"/>
    <property type="project" value="RHEA"/>
</dbReference>
<dbReference type="GO" id="GO:0004674">
    <property type="term" value="F:protein serine/threonine kinase activity"/>
    <property type="evidence" value="ECO:0000318"/>
    <property type="project" value="GO_Central"/>
</dbReference>
<dbReference type="GO" id="GO:0032120">
    <property type="term" value="P:ascospore-type prospore membrane formation"/>
    <property type="evidence" value="ECO:0000315"/>
    <property type="project" value="PomBase"/>
</dbReference>
<dbReference type="GO" id="GO:0035556">
    <property type="term" value="P:intracellular signal transduction"/>
    <property type="evidence" value="ECO:0000318"/>
    <property type="project" value="GO_Central"/>
</dbReference>
<dbReference type="GO" id="GO:0140043">
    <property type="term" value="P:lipid droplet localization to prospore membrane leading edge"/>
    <property type="evidence" value="ECO:0000269"/>
    <property type="project" value="PomBase"/>
</dbReference>
<dbReference type="GO" id="GO:1903023">
    <property type="term" value="P:regulation of ascospore-type prospore membrane formation"/>
    <property type="evidence" value="ECO:0000315"/>
    <property type="project" value="PomBase"/>
</dbReference>
<dbReference type="CDD" id="cd21776">
    <property type="entry name" value="MobB_Sid2p-like"/>
    <property type="match status" value="1"/>
</dbReference>
<dbReference type="CDD" id="cd05600">
    <property type="entry name" value="STKc_Sid2p_like"/>
    <property type="match status" value="1"/>
</dbReference>
<dbReference type="FunFam" id="1.10.510.10:FF:000141">
    <property type="entry name" value="Non-specific serine/threonine protein kinase"/>
    <property type="match status" value="1"/>
</dbReference>
<dbReference type="FunFam" id="1.10.510.10:FF:000319">
    <property type="entry name" value="Non-specific serine/threonine protein kinase"/>
    <property type="match status" value="1"/>
</dbReference>
<dbReference type="FunFam" id="3.30.200.20:FF:000109">
    <property type="entry name" value="Non-specific serine/threonine protein kinase"/>
    <property type="match status" value="1"/>
</dbReference>
<dbReference type="Gene3D" id="3.30.200.20">
    <property type="entry name" value="Phosphorylase Kinase, domain 1"/>
    <property type="match status" value="2"/>
</dbReference>
<dbReference type="Gene3D" id="1.10.510.10">
    <property type="entry name" value="Transferase(Phosphotransferase) domain 1"/>
    <property type="match status" value="2"/>
</dbReference>
<dbReference type="InterPro" id="IPR000961">
    <property type="entry name" value="AGC-kinase_C"/>
</dbReference>
<dbReference type="InterPro" id="IPR011009">
    <property type="entry name" value="Kinase-like_dom_sf"/>
</dbReference>
<dbReference type="InterPro" id="IPR017892">
    <property type="entry name" value="Pkinase_C"/>
</dbReference>
<dbReference type="InterPro" id="IPR000719">
    <property type="entry name" value="Prot_kinase_dom"/>
</dbReference>
<dbReference type="InterPro" id="IPR017441">
    <property type="entry name" value="Protein_kinase_ATP_BS"/>
</dbReference>
<dbReference type="InterPro" id="IPR008271">
    <property type="entry name" value="Ser/Thr_kinase_AS"/>
</dbReference>
<dbReference type="InterPro" id="IPR050236">
    <property type="entry name" value="Ser_Thr_kinase_AGC"/>
</dbReference>
<dbReference type="PANTHER" id="PTHR24356">
    <property type="entry name" value="SERINE/THREONINE-PROTEIN KINASE"/>
    <property type="match status" value="1"/>
</dbReference>
<dbReference type="PANTHER" id="PTHR24356:SF420">
    <property type="entry name" value="SERINE_THREONINE-PROTEIN KINASE PPK35"/>
    <property type="match status" value="1"/>
</dbReference>
<dbReference type="Pfam" id="PF00069">
    <property type="entry name" value="Pkinase"/>
    <property type="match status" value="2"/>
</dbReference>
<dbReference type="Pfam" id="PF00433">
    <property type="entry name" value="Pkinase_C"/>
    <property type="match status" value="1"/>
</dbReference>
<dbReference type="SMART" id="SM00133">
    <property type="entry name" value="S_TK_X"/>
    <property type="match status" value="1"/>
</dbReference>
<dbReference type="SMART" id="SM00220">
    <property type="entry name" value="S_TKc"/>
    <property type="match status" value="1"/>
</dbReference>
<dbReference type="SUPFAM" id="SSF56112">
    <property type="entry name" value="Protein kinase-like (PK-like)"/>
    <property type="match status" value="1"/>
</dbReference>
<dbReference type="PROSITE" id="PS51285">
    <property type="entry name" value="AGC_KINASE_CTER"/>
    <property type="match status" value="1"/>
</dbReference>
<dbReference type="PROSITE" id="PS00107">
    <property type="entry name" value="PROTEIN_KINASE_ATP"/>
    <property type="match status" value="1"/>
</dbReference>
<dbReference type="PROSITE" id="PS50011">
    <property type="entry name" value="PROTEIN_KINASE_DOM"/>
    <property type="match status" value="1"/>
</dbReference>
<dbReference type="PROSITE" id="PS00108">
    <property type="entry name" value="PROTEIN_KINASE_ST"/>
    <property type="match status" value="1"/>
</dbReference>
<protein>
    <recommendedName>
        <fullName>Serine/threonine-protein kinase ppk35</fullName>
        <ecNumber>2.7.11.1</ecNumber>
    </recommendedName>
    <alternativeName>
        <fullName>Meiotically up-regulated gene 27 protein</fullName>
    </alternativeName>
</protein>
<feature type="chain" id="PRO_0000256830" description="Serine/threonine-protein kinase ppk35">
    <location>
        <begin position="1"/>
        <end position="624"/>
    </location>
</feature>
<feature type="domain" description="Protein kinase" evidence="1">
    <location>
        <begin position="162"/>
        <end position="465"/>
    </location>
</feature>
<feature type="domain" description="AGC-kinase C-terminal" evidence="2">
    <location>
        <begin position="466"/>
        <end position="548"/>
    </location>
</feature>
<feature type="region of interest" description="Disordered" evidence="4">
    <location>
        <begin position="545"/>
        <end position="617"/>
    </location>
</feature>
<feature type="compositionally biased region" description="Basic residues" evidence="4">
    <location>
        <begin position="545"/>
        <end position="559"/>
    </location>
</feature>
<feature type="compositionally biased region" description="Basic and acidic residues" evidence="4">
    <location>
        <begin position="560"/>
        <end position="574"/>
    </location>
</feature>
<feature type="compositionally biased region" description="Basic residues" evidence="4">
    <location>
        <begin position="596"/>
        <end position="609"/>
    </location>
</feature>
<feature type="active site" description="Proton acceptor" evidence="1 3">
    <location>
        <position position="285"/>
    </location>
</feature>
<feature type="binding site" evidence="1">
    <location>
        <begin position="168"/>
        <end position="176"/>
    </location>
    <ligand>
        <name>ATP</name>
        <dbReference type="ChEBI" id="CHEBI:30616"/>
    </ligand>
</feature>
<feature type="binding site" evidence="1">
    <location>
        <position position="191"/>
    </location>
    <ligand>
        <name>ATP</name>
        <dbReference type="ChEBI" id="CHEBI:30616"/>
    </ligand>
</feature>
<reference key="1">
    <citation type="journal article" date="2002" name="Nature">
        <title>The genome sequence of Schizosaccharomyces pombe.</title>
        <authorList>
            <person name="Wood V."/>
            <person name="Gwilliam R."/>
            <person name="Rajandream M.A."/>
            <person name="Lyne M.H."/>
            <person name="Lyne R."/>
            <person name="Stewart A."/>
            <person name="Sgouros J.G."/>
            <person name="Peat N."/>
            <person name="Hayles J."/>
            <person name="Baker S.G."/>
            <person name="Basham D."/>
            <person name="Bowman S."/>
            <person name="Brooks K."/>
            <person name="Brown D."/>
            <person name="Brown S."/>
            <person name="Chillingworth T."/>
            <person name="Churcher C.M."/>
            <person name="Collins M."/>
            <person name="Connor R."/>
            <person name="Cronin A."/>
            <person name="Davis P."/>
            <person name="Feltwell T."/>
            <person name="Fraser A."/>
            <person name="Gentles S."/>
            <person name="Goble A."/>
            <person name="Hamlin N."/>
            <person name="Harris D.E."/>
            <person name="Hidalgo J."/>
            <person name="Hodgson G."/>
            <person name="Holroyd S."/>
            <person name="Hornsby T."/>
            <person name="Howarth S."/>
            <person name="Huckle E.J."/>
            <person name="Hunt S."/>
            <person name="Jagels K."/>
            <person name="James K.D."/>
            <person name="Jones L."/>
            <person name="Jones M."/>
            <person name="Leather S."/>
            <person name="McDonald S."/>
            <person name="McLean J."/>
            <person name="Mooney P."/>
            <person name="Moule S."/>
            <person name="Mungall K.L."/>
            <person name="Murphy L.D."/>
            <person name="Niblett D."/>
            <person name="Odell C."/>
            <person name="Oliver K."/>
            <person name="O'Neil S."/>
            <person name="Pearson D."/>
            <person name="Quail M.A."/>
            <person name="Rabbinowitsch E."/>
            <person name="Rutherford K.M."/>
            <person name="Rutter S."/>
            <person name="Saunders D."/>
            <person name="Seeger K."/>
            <person name="Sharp S."/>
            <person name="Skelton J."/>
            <person name="Simmonds M.N."/>
            <person name="Squares R."/>
            <person name="Squares S."/>
            <person name="Stevens K."/>
            <person name="Taylor K."/>
            <person name="Taylor R.G."/>
            <person name="Tivey A."/>
            <person name="Walsh S.V."/>
            <person name="Warren T."/>
            <person name="Whitehead S."/>
            <person name="Woodward J.R."/>
            <person name="Volckaert G."/>
            <person name="Aert R."/>
            <person name="Robben J."/>
            <person name="Grymonprez B."/>
            <person name="Weltjens I."/>
            <person name="Vanstreels E."/>
            <person name="Rieger M."/>
            <person name="Schaefer M."/>
            <person name="Mueller-Auer S."/>
            <person name="Gabel C."/>
            <person name="Fuchs M."/>
            <person name="Duesterhoeft A."/>
            <person name="Fritzc C."/>
            <person name="Holzer E."/>
            <person name="Moestl D."/>
            <person name="Hilbert H."/>
            <person name="Borzym K."/>
            <person name="Langer I."/>
            <person name="Beck A."/>
            <person name="Lehrach H."/>
            <person name="Reinhardt R."/>
            <person name="Pohl T.M."/>
            <person name="Eger P."/>
            <person name="Zimmermann W."/>
            <person name="Wedler H."/>
            <person name="Wambutt R."/>
            <person name="Purnelle B."/>
            <person name="Goffeau A."/>
            <person name="Cadieu E."/>
            <person name="Dreano S."/>
            <person name="Gloux S."/>
            <person name="Lelaure V."/>
            <person name="Mottier S."/>
            <person name="Galibert F."/>
            <person name="Aves S.J."/>
            <person name="Xiang Z."/>
            <person name="Hunt C."/>
            <person name="Moore K."/>
            <person name="Hurst S.M."/>
            <person name="Lucas M."/>
            <person name="Rochet M."/>
            <person name="Gaillardin C."/>
            <person name="Tallada V.A."/>
            <person name="Garzon A."/>
            <person name="Thode G."/>
            <person name="Daga R.R."/>
            <person name="Cruzado L."/>
            <person name="Jimenez J."/>
            <person name="Sanchez M."/>
            <person name="del Rey F."/>
            <person name="Benito J."/>
            <person name="Dominguez A."/>
            <person name="Revuelta J.L."/>
            <person name="Moreno S."/>
            <person name="Armstrong J."/>
            <person name="Forsburg S.L."/>
            <person name="Cerutti L."/>
            <person name="Lowe T."/>
            <person name="McCombie W.R."/>
            <person name="Paulsen I."/>
            <person name="Potashkin J."/>
            <person name="Shpakovski G.V."/>
            <person name="Ussery D."/>
            <person name="Barrell B.G."/>
            <person name="Nurse P."/>
        </authorList>
    </citation>
    <scope>NUCLEOTIDE SEQUENCE [LARGE SCALE GENOMIC DNA]</scope>
    <source>
        <strain>972 / ATCC 24843</strain>
    </source>
</reference>
<reference key="2">
    <citation type="journal article" date="2005" name="Curr. Biol.">
        <title>A large-scale screen in S. pombe identifies seven novel genes required for critical meiotic events.</title>
        <authorList>
            <person name="Martin-Castellanos C."/>
            <person name="Blanco M."/>
            <person name="Rozalen A.E."/>
            <person name="Perez-Hidalgo L."/>
            <person name="Garcia A.I."/>
            <person name="Conde F."/>
            <person name="Mata J."/>
            <person name="Ellermeier C."/>
            <person name="Davis L."/>
            <person name="San-Segundo P."/>
            <person name="Smith G.R."/>
            <person name="Moreno S."/>
        </authorList>
    </citation>
    <scope>FUNCTION IN MEIOSIS</scope>
</reference>
<reference key="3">
    <citation type="journal article" date="2005" name="Eukaryot. Cell">
        <title>Systematic deletion analysis of fission yeast protein kinases.</title>
        <authorList>
            <person name="Bimbo A."/>
            <person name="Jia Y."/>
            <person name="Poh S.L."/>
            <person name="Karuturi R.K.M."/>
            <person name="den Elzen N."/>
            <person name="Peng X."/>
            <person name="Zheng L."/>
            <person name="O'Connell M."/>
            <person name="Liu E.T."/>
            <person name="Balasubramanian M.K."/>
            <person name="Liu J."/>
        </authorList>
    </citation>
    <scope>IDENTIFICATION</scope>
</reference>
<reference key="4">
    <citation type="journal article" date="2006" name="Nat. Biotechnol.">
        <title>ORFeome cloning and global analysis of protein localization in the fission yeast Schizosaccharomyces pombe.</title>
        <authorList>
            <person name="Matsuyama A."/>
            <person name="Arai R."/>
            <person name="Yashiroda Y."/>
            <person name="Shirai A."/>
            <person name="Kamata A."/>
            <person name="Sekido S."/>
            <person name="Kobayashi Y."/>
            <person name="Hashimoto A."/>
            <person name="Hamamoto M."/>
            <person name="Hiraoka Y."/>
            <person name="Horinouchi S."/>
            <person name="Yoshida M."/>
        </authorList>
    </citation>
    <scope>SUBCELLULAR LOCATION [LARGE SCALE ANALYSIS]</scope>
</reference>
<proteinExistence type="evidence at protein level"/>
<gene>
    <name type="primary">ppk35</name>
    <name type="synonym">mug27</name>
    <name type="ORF">SPCC417.06c</name>
</gene>
<organism>
    <name type="scientific">Schizosaccharomyces pombe (strain 972 / ATCC 24843)</name>
    <name type="common">Fission yeast</name>
    <dbReference type="NCBI Taxonomy" id="284812"/>
    <lineage>
        <taxon>Eukaryota</taxon>
        <taxon>Fungi</taxon>
        <taxon>Dikarya</taxon>
        <taxon>Ascomycota</taxon>
        <taxon>Taphrinomycotina</taxon>
        <taxon>Schizosaccharomycetes</taxon>
        <taxon>Schizosaccharomycetales</taxon>
        <taxon>Schizosaccharomycetaceae</taxon>
        <taxon>Schizosaccharomyces</taxon>
    </lineage>
</organism>
<accession>O94487</accession>
<keyword id="KW-0067">ATP-binding</keyword>
<keyword id="KW-0963">Cytoplasm</keyword>
<keyword id="KW-0418">Kinase</keyword>
<keyword id="KW-0469">Meiosis</keyword>
<keyword id="KW-0547">Nucleotide-binding</keyword>
<keyword id="KW-0539">Nucleus</keyword>
<keyword id="KW-0597">Phosphoprotein</keyword>
<keyword id="KW-1185">Reference proteome</keyword>
<keyword id="KW-0723">Serine/threonine-protein kinase</keyword>
<keyword id="KW-0808">Transferase</keyword>
<evidence type="ECO:0000255" key="1">
    <source>
        <dbReference type="PROSITE-ProRule" id="PRU00159"/>
    </source>
</evidence>
<evidence type="ECO:0000255" key="2">
    <source>
        <dbReference type="PROSITE-ProRule" id="PRU00618"/>
    </source>
</evidence>
<evidence type="ECO:0000255" key="3">
    <source>
        <dbReference type="PROSITE-ProRule" id="PRU10027"/>
    </source>
</evidence>
<evidence type="ECO:0000256" key="4">
    <source>
        <dbReference type="SAM" id="MobiDB-lite"/>
    </source>
</evidence>
<evidence type="ECO:0000269" key="5">
    <source>
    </source>
</evidence>
<evidence type="ECO:0000269" key="6">
    <source>
    </source>
</evidence>